<keyword id="KW-0028">Amino-acid biosynthesis</keyword>
<keyword id="KW-0055">Arginine biosynthesis</keyword>
<keyword id="KW-0067">ATP-binding</keyword>
<keyword id="KW-0963">Cytoplasm</keyword>
<keyword id="KW-0436">Ligase</keyword>
<keyword id="KW-0547">Nucleotide-binding</keyword>
<reference key="1">
    <citation type="journal article" date="2003" name="Mol. Microbiol.">
        <title>Genome-based analysis of virulence genes in a non-biofilm-forming Staphylococcus epidermidis strain (ATCC 12228).</title>
        <authorList>
            <person name="Zhang Y.-Q."/>
            <person name="Ren S.-X."/>
            <person name="Li H.-L."/>
            <person name="Wang Y.-X."/>
            <person name="Fu G."/>
            <person name="Yang J."/>
            <person name="Qin Z.-Q."/>
            <person name="Miao Y.-G."/>
            <person name="Wang W.-Y."/>
            <person name="Chen R.-S."/>
            <person name="Shen Y."/>
            <person name="Chen Z."/>
            <person name="Yuan Z.-H."/>
            <person name="Zhao G.-P."/>
            <person name="Qu D."/>
            <person name="Danchin A."/>
            <person name="Wen Y.-M."/>
        </authorList>
    </citation>
    <scope>NUCLEOTIDE SEQUENCE [LARGE SCALE GENOMIC DNA]</scope>
    <source>
        <strain>ATCC 12228 / FDA PCI 1200</strain>
    </source>
</reference>
<evidence type="ECO:0000255" key="1">
    <source>
        <dbReference type="HAMAP-Rule" id="MF_00005"/>
    </source>
</evidence>
<sequence length="401" mass="44742">MKDKIVLAYSGGLDTSVAVQWLIDKGYDVVACCLDVGEGKDLDVVYQKALDMGAVECHIIDATKEFSDDYVSYAIKGNLMYENAYPLVSALSRPLIAKKLVEIAEKTNSIGIAHGCTGKGNDQVRFEVAIKALNPKLKAFAPVREWAWSREEEIDYAIKHNIPVSINYDSPYSIDQNLWGRANECGILEDPYAAPPEDAFDLTTPLEETPDNADEIILTFKQGIPVQVDGKDYQLDDLILYLNQLAGKHGIGRIDHVENRMVGIKSREIYETPGAEVILKAHKALETITLTKDVAHFKPVIEKQFSEQIYNGLWFSPLTDSLKLFIDSTQQYVEGDVRIKLFKGNAIVNGRQSPYTLYDEKLATYTKEDAFNQESAVGFIDIYGLPTQVNALLHGGYSNEQ</sequence>
<gene>
    <name evidence="1" type="primary">argG</name>
    <name type="ordered locus">SE_0657</name>
</gene>
<dbReference type="EC" id="6.3.4.5" evidence="1"/>
<dbReference type="EMBL" id="AE015929">
    <property type="protein sequence ID" value="AAO04254.1"/>
    <property type="molecule type" value="Genomic_DNA"/>
</dbReference>
<dbReference type="RefSeq" id="NP_764212.1">
    <property type="nucleotide sequence ID" value="NC_004461.1"/>
</dbReference>
<dbReference type="RefSeq" id="WP_001832499.1">
    <property type="nucleotide sequence ID" value="NZ_WBME01000043.1"/>
</dbReference>
<dbReference type="SMR" id="Q8CPU3"/>
<dbReference type="KEGG" id="sep:SE_0657"/>
<dbReference type="PATRIC" id="fig|176280.10.peg.631"/>
<dbReference type="eggNOG" id="COG0137">
    <property type="taxonomic scope" value="Bacteria"/>
</dbReference>
<dbReference type="HOGENOM" id="CLU_032784_4_2_9"/>
<dbReference type="OrthoDB" id="9801641at2"/>
<dbReference type="UniPathway" id="UPA00068">
    <property type="reaction ID" value="UER00113"/>
</dbReference>
<dbReference type="Proteomes" id="UP000001411">
    <property type="component" value="Chromosome"/>
</dbReference>
<dbReference type="GO" id="GO:0005737">
    <property type="term" value="C:cytoplasm"/>
    <property type="evidence" value="ECO:0007669"/>
    <property type="project" value="UniProtKB-SubCell"/>
</dbReference>
<dbReference type="GO" id="GO:0004055">
    <property type="term" value="F:argininosuccinate synthase activity"/>
    <property type="evidence" value="ECO:0007669"/>
    <property type="project" value="UniProtKB-UniRule"/>
</dbReference>
<dbReference type="GO" id="GO:0005524">
    <property type="term" value="F:ATP binding"/>
    <property type="evidence" value="ECO:0007669"/>
    <property type="project" value="UniProtKB-UniRule"/>
</dbReference>
<dbReference type="GO" id="GO:0000053">
    <property type="term" value="P:argininosuccinate metabolic process"/>
    <property type="evidence" value="ECO:0007669"/>
    <property type="project" value="TreeGrafter"/>
</dbReference>
<dbReference type="GO" id="GO:0006526">
    <property type="term" value="P:L-arginine biosynthetic process"/>
    <property type="evidence" value="ECO:0007669"/>
    <property type="project" value="UniProtKB-UniRule"/>
</dbReference>
<dbReference type="GO" id="GO:0000050">
    <property type="term" value="P:urea cycle"/>
    <property type="evidence" value="ECO:0007669"/>
    <property type="project" value="TreeGrafter"/>
</dbReference>
<dbReference type="CDD" id="cd01999">
    <property type="entry name" value="ASS"/>
    <property type="match status" value="1"/>
</dbReference>
<dbReference type="FunFam" id="1.20.5.470:FF:000002">
    <property type="entry name" value="Argininosuccinate synthase"/>
    <property type="match status" value="1"/>
</dbReference>
<dbReference type="FunFam" id="3.40.50.620:FF:000038">
    <property type="entry name" value="Argininosuccinate synthase"/>
    <property type="match status" value="1"/>
</dbReference>
<dbReference type="FunFam" id="3.90.1260.10:FF:000007">
    <property type="entry name" value="Argininosuccinate synthase"/>
    <property type="match status" value="1"/>
</dbReference>
<dbReference type="Gene3D" id="3.90.1260.10">
    <property type="entry name" value="Argininosuccinate synthetase, chain A, domain 2"/>
    <property type="match status" value="1"/>
</dbReference>
<dbReference type="Gene3D" id="3.40.50.620">
    <property type="entry name" value="HUPs"/>
    <property type="match status" value="1"/>
</dbReference>
<dbReference type="Gene3D" id="1.20.5.470">
    <property type="entry name" value="Single helix bin"/>
    <property type="match status" value="1"/>
</dbReference>
<dbReference type="HAMAP" id="MF_00005">
    <property type="entry name" value="Arg_succ_synth_type1"/>
    <property type="match status" value="1"/>
</dbReference>
<dbReference type="InterPro" id="IPR048268">
    <property type="entry name" value="Arginosuc_syn_C"/>
</dbReference>
<dbReference type="InterPro" id="IPR048267">
    <property type="entry name" value="Arginosuc_syn_N"/>
</dbReference>
<dbReference type="InterPro" id="IPR001518">
    <property type="entry name" value="Arginosuc_synth"/>
</dbReference>
<dbReference type="InterPro" id="IPR018223">
    <property type="entry name" value="Arginosuc_synth_CS"/>
</dbReference>
<dbReference type="InterPro" id="IPR023434">
    <property type="entry name" value="Arginosuc_synth_type_1_subfam"/>
</dbReference>
<dbReference type="InterPro" id="IPR024074">
    <property type="entry name" value="AS_cat/multimer_dom_body"/>
</dbReference>
<dbReference type="InterPro" id="IPR014729">
    <property type="entry name" value="Rossmann-like_a/b/a_fold"/>
</dbReference>
<dbReference type="NCBIfam" id="TIGR00032">
    <property type="entry name" value="argG"/>
    <property type="match status" value="1"/>
</dbReference>
<dbReference type="NCBIfam" id="NF001770">
    <property type="entry name" value="PRK00509.1"/>
    <property type="match status" value="1"/>
</dbReference>
<dbReference type="PANTHER" id="PTHR11587">
    <property type="entry name" value="ARGININOSUCCINATE SYNTHASE"/>
    <property type="match status" value="1"/>
</dbReference>
<dbReference type="PANTHER" id="PTHR11587:SF2">
    <property type="entry name" value="ARGININOSUCCINATE SYNTHASE"/>
    <property type="match status" value="1"/>
</dbReference>
<dbReference type="Pfam" id="PF20979">
    <property type="entry name" value="Arginosuc_syn_C"/>
    <property type="match status" value="1"/>
</dbReference>
<dbReference type="Pfam" id="PF00764">
    <property type="entry name" value="Arginosuc_synth"/>
    <property type="match status" value="1"/>
</dbReference>
<dbReference type="SUPFAM" id="SSF52402">
    <property type="entry name" value="Adenine nucleotide alpha hydrolases-like"/>
    <property type="match status" value="1"/>
</dbReference>
<dbReference type="SUPFAM" id="SSF69864">
    <property type="entry name" value="Argininosuccinate synthetase, C-terminal domain"/>
    <property type="match status" value="1"/>
</dbReference>
<dbReference type="PROSITE" id="PS00564">
    <property type="entry name" value="ARGININOSUCCIN_SYN_1"/>
    <property type="match status" value="1"/>
</dbReference>
<dbReference type="PROSITE" id="PS00565">
    <property type="entry name" value="ARGININOSUCCIN_SYN_2"/>
    <property type="match status" value="1"/>
</dbReference>
<accession>Q8CPU3</accession>
<name>ASSY_STAES</name>
<proteinExistence type="inferred from homology"/>
<feature type="chain" id="PRO_0000148641" description="Argininosuccinate synthase">
    <location>
        <begin position="1"/>
        <end position="401"/>
    </location>
</feature>
<feature type="binding site" evidence="1">
    <location>
        <begin position="8"/>
        <end position="16"/>
    </location>
    <ligand>
        <name>ATP</name>
        <dbReference type="ChEBI" id="CHEBI:30616"/>
    </ligand>
</feature>
<feature type="binding site" evidence="1">
    <location>
        <position position="85"/>
    </location>
    <ligand>
        <name>L-citrulline</name>
        <dbReference type="ChEBI" id="CHEBI:57743"/>
    </ligand>
</feature>
<feature type="binding site" evidence="1">
    <location>
        <position position="115"/>
    </location>
    <ligand>
        <name>ATP</name>
        <dbReference type="ChEBI" id="CHEBI:30616"/>
    </ligand>
</feature>
<feature type="binding site" evidence="1">
    <location>
        <position position="117"/>
    </location>
    <ligand>
        <name>L-aspartate</name>
        <dbReference type="ChEBI" id="CHEBI:29991"/>
    </ligand>
</feature>
<feature type="binding site" evidence="1">
    <location>
        <position position="121"/>
    </location>
    <ligand>
        <name>L-aspartate</name>
        <dbReference type="ChEBI" id="CHEBI:29991"/>
    </ligand>
</feature>
<feature type="binding site" evidence="1">
    <location>
        <position position="121"/>
    </location>
    <ligand>
        <name>L-citrulline</name>
        <dbReference type="ChEBI" id="CHEBI:57743"/>
    </ligand>
</feature>
<feature type="binding site" evidence="1">
    <location>
        <position position="122"/>
    </location>
    <ligand>
        <name>L-aspartate</name>
        <dbReference type="ChEBI" id="CHEBI:29991"/>
    </ligand>
</feature>
<feature type="binding site" evidence="1">
    <location>
        <position position="125"/>
    </location>
    <ligand>
        <name>L-citrulline</name>
        <dbReference type="ChEBI" id="CHEBI:57743"/>
    </ligand>
</feature>
<feature type="binding site" evidence="1">
    <location>
        <position position="173"/>
    </location>
    <ligand>
        <name>L-citrulline</name>
        <dbReference type="ChEBI" id="CHEBI:57743"/>
    </ligand>
</feature>
<feature type="binding site" evidence="1">
    <location>
        <position position="258"/>
    </location>
    <ligand>
        <name>L-citrulline</name>
        <dbReference type="ChEBI" id="CHEBI:57743"/>
    </ligand>
</feature>
<feature type="binding site" evidence="1">
    <location>
        <position position="270"/>
    </location>
    <ligand>
        <name>L-citrulline</name>
        <dbReference type="ChEBI" id="CHEBI:57743"/>
    </ligand>
</feature>
<protein>
    <recommendedName>
        <fullName evidence="1">Argininosuccinate synthase</fullName>
        <ecNumber evidence="1">6.3.4.5</ecNumber>
    </recommendedName>
    <alternativeName>
        <fullName evidence="1">Citrulline--aspartate ligase</fullName>
    </alternativeName>
</protein>
<organism>
    <name type="scientific">Staphylococcus epidermidis (strain ATCC 12228 / FDA PCI 1200)</name>
    <dbReference type="NCBI Taxonomy" id="176280"/>
    <lineage>
        <taxon>Bacteria</taxon>
        <taxon>Bacillati</taxon>
        <taxon>Bacillota</taxon>
        <taxon>Bacilli</taxon>
        <taxon>Bacillales</taxon>
        <taxon>Staphylococcaceae</taxon>
        <taxon>Staphylococcus</taxon>
    </lineage>
</organism>
<comment type="catalytic activity">
    <reaction evidence="1">
        <text>L-citrulline + L-aspartate + ATP = 2-(N(omega)-L-arginino)succinate + AMP + diphosphate + H(+)</text>
        <dbReference type="Rhea" id="RHEA:10932"/>
        <dbReference type="ChEBI" id="CHEBI:15378"/>
        <dbReference type="ChEBI" id="CHEBI:29991"/>
        <dbReference type="ChEBI" id="CHEBI:30616"/>
        <dbReference type="ChEBI" id="CHEBI:33019"/>
        <dbReference type="ChEBI" id="CHEBI:57472"/>
        <dbReference type="ChEBI" id="CHEBI:57743"/>
        <dbReference type="ChEBI" id="CHEBI:456215"/>
        <dbReference type="EC" id="6.3.4.5"/>
    </reaction>
</comment>
<comment type="pathway">
    <text evidence="1">Amino-acid biosynthesis; L-arginine biosynthesis; L-arginine from L-ornithine and carbamoyl phosphate: step 2/3.</text>
</comment>
<comment type="subunit">
    <text evidence="1">Homotetramer.</text>
</comment>
<comment type="subcellular location">
    <subcellularLocation>
        <location evidence="1">Cytoplasm</location>
    </subcellularLocation>
</comment>
<comment type="similarity">
    <text evidence="1">Belongs to the argininosuccinate synthase family. Type 1 subfamily.</text>
</comment>